<comment type="function">
    <text evidence="1">Catalyzes the hydrolysis of glutamine to glutamate and ammonia as part of the biosynthesis of pyridoxal 5'-phosphate. The resulting ammonia molecule is channeled to the active site of PdxS.</text>
</comment>
<comment type="catalytic activity">
    <reaction evidence="1">
        <text>aldehydo-D-ribose 5-phosphate + D-glyceraldehyde 3-phosphate + L-glutamine = pyridoxal 5'-phosphate + L-glutamate + phosphate + 3 H2O + H(+)</text>
        <dbReference type="Rhea" id="RHEA:31507"/>
        <dbReference type="ChEBI" id="CHEBI:15377"/>
        <dbReference type="ChEBI" id="CHEBI:15378"/>
        <dbReference type="ChEBI" id="CHEBI:29985"/>
        <dbReference type="ChEBI" id="CHEBI:43474"/>
        <dbReference type="ChEBI" id="CHEBI:58273"/>
        <dbReference type="ChEBI" id="CHEBI:58359"/>
        <dbReference type="ChEBI" id="CHEBI:59776"/>
        <dbReference type="ChEBI" id="CHEBI:597326"/>
        <dbReference type="EC" id="4.3.3.6"/>
    </reaction>
</comment>
<comment type="catalytic activity">
    <reaction evidence="1">
        <text>L-glutamine + H2O = L-glutamate + NH4(+)</text>
        <dbReference type="Rhea" id="RHEA:15889"/>
        <dbReference type="ChEBI" id="CHEBI:15377"/>
        <dbReference type="ChEBI" id="CHEBI:28938"/>
        <dbReference type="ChEBI" id="CHEBI:29985"/>
        <dbReference type="ChEBI" id="CHEBI:58359"/>
        <dbReference type="EC" id="3.5.1.2"/>
    </reaction>
</comment>
<comment type="pathway">
    <text evidence="1">Cofactor biosynthesis; pyridoxal 5'-phosphate biosynthesis.</text>
</comment>
<comment type="subunit">
    <text evidence="1">In the presence of PdxS, forms a dodecamer of heterodimers. Only shows activity in the heterodimer.</text>
</comment>
<comment type="similarity">
    <text evidence="1">Belongs to the glutaminase PdxT/SNO family.</text>
</comment>
<proteinExistence type="inferred from homology"/>
<accession>C1C862</accession>
<name>PDXT_STRP7</name>
<evidence type="ECO:0000255" key="1">
    <source>
        <dbReference type="HAMAP-Rule" id="MF_01615"/>
    </source>
</evidence>
<gene>
    <name evidence="1" type="primary">pdxT</name>
    <name type="ordered locus">SP70585_1508</name>
</gene>
<organism>
    <name type="scientific">Streptococcus pneumoniae (strain 70585)</name>
    <dbReference type="NCBI Taxonomy" id="488221"/>
    <lineage>
        <taxon>Bacteria</taxon>
        <taxon>Bacillati</taxon>
        <taxon>Bacillota</taxon>
        <taxon>Bacilli</taxon>
        <taxon>Lactobacillales</taxon>
        <taxon>Streptococcaceae</taxon>
        <taxon>Streptococcus</taxon>
    </lineage>
</organism>
<sequence length="193" mass="21094">MKIGILALQGAFAEHAKVLDQLGVESVELRNLDDFQQDQSDLSGLILPGGESTTMGKLLRDQNMLLPIREAILSGLPVFGTCAGLILLAKEITSQKESHLGTMDMVVERNAYGRQLGSFYTEAECKGVGKIPMTFIRGPIISSVGEGVEILATVNNQIVAAQEKNMLVSSFHPELTDDVRLHQYFINMCKEKS</sequence>
<feature type="chain" id="PRO_1000185902" description="Pyridoxal 5'-phosphate synthase subunit PdxT">
    <location>
        <begin position="1"/>
        <end position="193"/>
    </location>
</feature>
<feature type="active site" description="Nucleophile" evidence="1">
    <location>
        <position position="82"/>
    </location>
</feature>
<feature type="active site" description="Charge relay system" evidence="1">
    <location>
        <position position="172"/>
    </location>
</feature>
<feature type="active site" description="Charge relay system" evidence="1">
    <location>
        <position position="174"/>
    </location>
</feature>
<feature type="binding site" evidence="1">
    <location>
        <begin position="50"/>
        <end position="52"/>
    </location>
    <ligand>
        <name>L-glutamine</name>
        <dbReference type="ChEBI" id="CHEBI:58359"/>
    </ligand>
</feature>
<feature type="binding site" evidence="1">
    <location>
        <position position="109"/>
    </location>
    <ligand>
        <name>L-glutamine</name>
        <dbReference type="ChEBI" id="CHEBI:58359"/>
    </ligand>
</feature>
<feature type="binding site" evidence="1">
    <location>
        <begin position="136"/>
        <end position="137"/>
    </location>
    <ligand>
        <name>L-glutamine</name>
        <dbReference type="ChEBI" id="CHEBI:58359"/>
    </ligand>
</feature>
<keyword id="KW-0315">Glutamine amidotransferase</keyword>
<keyword id="KW-0378">Hydrolase</keyword>
<keyword id="KW-0456">Lyase</keyword>
<keyword id="KW-0663">Pyridoxal phosphate</keyword>
<reference key="1">
    <citation type="journal article" date="2010" name="Genome Biol.">
        <title>Structure and dynamics of the pan-genome of Streptococcus pneumoniae and closely related species.</title>
        <authorList>
            <person name="Donati C."/>
            <person name="Hiller N.L."/>
            <person name="Tettelin H."/>
            <person name="Muzzi A."/>
            <person name="Croucher N.J."/>
            <person name="Angiuoli S.V."/>
            <person name="Oggioni M."/>
            <person name="Dunning Hotopp J.C."/>
            <person name="Hu F.Z."/>
            <person name="Riley D.R."/>
            <person name="Covacci A."/>
            <person name="Mitchell T.J."/>
            <person name="Bentley S.D."/>
            <person name="Kilian M."/>
            <person name="Ehrlich G.D."/>
            <person name="Rappuoli R."/>
            <person name="Moxon E.R."/>
            <person name="Masignani V."/>
        </authorList>
    </citation>
    <scope>NUCLEOTIDE SEQUENCE [LARGE SCALE GENOMIC DNA]</scope>
    <source>
        <strain>70585</strain>
    </source>
</reference>
<protein>
    <recommendedName>
        <fullName evidence="1">Pyridoxal 5'-phosphate synthase subunit PdxT</fullName>
        <ecNumber evidence="1">4.3.3.6</ecNumber>
    </recommendedName>
    <alternativeName>
        <fullName evidence="1">Pdx2</fullName>
    </alternativeName>
    <alternativeName>
        <fullName evidence="1">Pyridoxal 5'-phosphate synthase glutaminase subunit</fullName>
        <ecNumber evidence="1">3.5.1.2</ecNumber>
    </alternativeName>
</protein>
<dbReference type="EC" id="4.3.3.6" evidence="1"/>
<dbReference type="EC" id="3.5.1.2" evidence="1"/>
<dbReference type="EMBL" id="CP000918">
    <property type="protein sequence ID" value="ACO17272.1"/>
    <property type="molecule type" value="Genomic_DNA"/>
</dbReference>
<dbReference type="RefSeq" id="WP_000689945.1">
    <property type="nucleotide sequence ID" value="NC_012468.1"/>
</dbReference>
<dbReference type="SMR" id="C1C862"/>
<dbReference type="MEROPS" id="C26.A32"/>
<dbReference type="GeneID" id="45653283"/>
<dbReference type="KEGG" id="snm:SP70585_1508"/>
<dbReference type="HOGENOM" id="CLU_069674_2_0_9"/>
<dbReference type="UniPathway" id="UPA00245"/>
<dbReference type="Proteomes" id="UP000002211">
    <property type="component" value="Chromosome"/>
</dbReference>
<dbReference type="GO" id="GO:0005829">
    <property type="term" value="C:cytosol"/>
    <property type="evidence" value="ECO:0007669"/>
    <property type="project" value="TreeGrafter"/>
</dbReference>
<dbReference type="GO" id="GO:1903600">
    <property type="term" value="C:glutaminase complex"/>
    <property type="evidence" value="ECO:0007669"/>
    <property type="project" value="TreeGrafter"/>
</dbReference>
<dbReference type="GO" id="GO:0004359">
    <property type="term" value="F:glutaminase activity"/>
    <property type="evidence" value="ECO:0007669"/>
    <property type="project" value="UniProtKB-UniRule"/>
</dbReference>
<dbReference type="GO" id="GO:0036381">
    <property type="term" value="F:pyridoxal 5'-phosphate synthase (glutamine hydrolysing) activity"/>
    <property type="evidence" value="ECO:0007669"/>
    <property type="project" value="UniProtKB-UniRule"/>
</dbReference>
<dbReference type="GO" id="GO:0006543">
    <property type="term" value="P:glutamine catabolic process"/>
    <property type="evidence" value="ECO:0007669"/>
    <property type="project" value="UniProtKB-UniRule"/>
</dbReference>
<dbReference type="GO" id="GO:0042823">
    <property type="term" value="P:pyridoxal phosphate biosynthetic process"/>
    <property type="evidence" value="ECO:0007669"/>
    <property type="project" value="UniProtKB-UniRule"/>
</dbReference>
<dbReference type="GO" id="GO:0008614">
    <property type="term" value="P:pyridoxine metabolic process"/>
    <property type="evidence" value="ECO:0007669"/>
    <property type="project" value="TreeGrafter"/>
</dbReference>
<dbReference type="CDD" id="cd01749">
    <property type="entry name" value="GATase1_PB"/>
    <property type="match status" value="1"/>
</dbReference>
<dbReference type="FunFam" id="3.40.50.880:FF:000010">
    <property type="entry name" value="uncharacterized protein LOC100176842 isoform X2"/>
    <property type="match status" value="1"/>
</dbReference>
<dbReference type="Gene3D" id="3.40.50.880">
    <property type="match status" value="1"/>
</dbReference>
<dbReference type="HAMAP" id="MF_01615">
    <property type="entry name" value="PdxT"/>
    <property type="match status" value="1"/>
</dbReference>
<dbReference type="InterPro" id="IPR029062">
    <property type="entry name" value="Class_I_gatase-like"/>
</dbReference>
<dbReference type="InterPro" id="IPR002161">
    <property type="entry name" value="PdxT/SNO"/>
</dbReference>
<dbReference type="InterPro" id="IPR021196">
    <property type="entry name" value="PdxT/SNO_CS"/>
</dbReference>
<dbReference type="NCBIfam" id="TIGR03800">
    <property type="entry name" value="PLP_synth_Pdx2"/>
    <property type="match status" value="1"/>
</dbReference>
<dbReference type="PANTHER" id="PTHR31559">
    <property type="entry name" value="PYRIDOXAL 5'-PHOSPHATE SYNTHASE SUBUNIT SNO"/>
    <property type="match status" value="1"/>
</dbReference>
<dbReference type="PANTHER" id="PTHR31559:SF0">
    <property type="entry name" value="PYRIDOXAL 5'-PHOSPHATE SYNTHASE SUBUNIT SNO1-RELATED"/>
    <property type="match status" value="1"/>
</dbReference>
<dbReference type="Pfam" id="PF01174">
    <property type="entry name" value="SNO"/>
    <property type="match status" value="1"/>
</dbReference>
<dbReference type="PIRSF" id="PIRSF005639">
    <property type="entry name" value="Glut_amidoT_SNO"/>
    <property type="match status" value="1"/>
</dbReference>
<dbReference type="SUPFAM" id="SSF52317">
    <property type="entry name" value="Class I glutamine amidotransferase-like"/>
    <property type="match status" value="1"/>
</dbReference>
<dbReference type="PROSITE" id="PS01236">
    <property type="entry name" value="PDXT_SNO_1"/>
    <property type="match status" value="1"/>
</dbReference>
<dbReference type="PROSITE" id="PS51130">
    <property type="entry name" value="PDXT_SNO_2"/>
    <property type="match status" value="1"/>
</dbReference>